<feature type="chain" id="PRO_0000125933" description="Heat shock protein beta-2">
    <location>
        <begin position="1"/>
        <end position="182"/>
    </location>
</feature>
<feature type="domain" description="sHSP" evidence="1">
    <location>
        <begin position="55"/>
        <end position="163"/>
    </location>
</feature>
<feature type="sequence variant" id="VAR_016316" description="In dbSNP:rs4252589." evidence="4">
    <original>G</original>
    <variation>S</variation>
    <location>
        <position position="111"/>
    </location>
</feature>
<protein>
    <recommendedName>
        <fullName>Heat shock protein beta-2</fullName>
        <shortName>HspB2</shortName>
    </recommendedName>
    <alternativeName>
        <fullName>DMPK-binding protein</fullName>
        <shortName>MKBP</shortName>
    </alternativeName>
    <alternativeName>
        <fullName>Heat shock protein family B member 2</fullName>
    </alternativeName>
</protein>
<organism>
    <name type="scientific">Homo sapiens</name>
    <name type="common">Human</name>
    <dbReference type="NCBI Taxonomy" id="9606"/>
    <lineage>
        <taxon>Eukaryota</taxon>
        <taxon>Metazoa</taxon>
        <taxon>Chordata</taxon>
        <taxon>Craniata</taxon>
        <taxon>Vertebrata</taxon>
        <taxon>Euteleostomi</taxon>
        <taxon>Mammalia</taxon>
        <taxon>Eutheria</taxon>
        <taxon>Euarchontoglires</taxon>
        <taxon>Primates</taxon>
        <taxon>Haplorrhini</taxon>
        <taxon>Catarrhini</taxon>
        <taxon>Hominidae</taxon>
        <taxon>Homo</taxon>
    </lineage>
</organism>
<keyword id="KW-0002">3D-structure</keyword>
<keyword id="KW-0963">Cytoplasm</keyword>
<keyword id="KW-0539">Nucleus</keyword>
<keyword id="KW-1267">Proteomics identification</keyword>
<keyword id="KW-1185">Reference proteome</keyword>
<keyword id="KW-0346">Stress response</keyword>
<accession>Q16082</accession>
<accession>Q6I9U7</accession>
<name>HSPB2_HUMAN</name>
<evidence type="ECO:0000255" key="1">
    <source>
        <dbReference type="PROSITE-ProRule" id="PRU00285"/>
    </source>
</evidence>
<evidence type="ECO:0000269" key="2">
    <source>
    </source>
</evidence>
<evidence type="ECO:0000269" key="3">
    <source>
    </source>
</evidence>
<evidence type="ECO:0000269" key="4">
    <source ref="4"/>
</evidence>
<dbReference type="EMBL" id="U75898">
    <property type="protein sequence ID" value="AAB82757.1"/>
    <property type="molecule type" value="Genomic_DNA"/>
</dbReference>
<dbReference type="EMBL" id="D89617">
    <property type="protein sequence ID" value="BAA24004.1"/>
    <property type="molecule type" value="mRNA"/>
</dbReference>
<dbReference type="EMBL" id="CR457408">
    <property type="protein sequence ID" value="CAG33689.1"/>
    <property type="molecule type" value="mRNA"/>
</dbReference>
<dbReference type="EMBL" id="AY208910">
    <property type="protein sequence ID" value="AAO18081.1"/>
    <property type="molecule type" value="Genomic_DNA"/>
</dbReference>
<dbReference type="EMBL" id="BC109393">
    <property type="protein sequence ID" value="AAI09394.1"/>
    <property type="molecule type" value="mRNA"/>
</dbReference>
<dbReference type="EMBL" id="S67070">
    <property type="protein sequence ID" value="AAB28816.1"/>
    <property type="molecule type" value="mRNA"/>
</dbReference>
<dbReference type="CCDS" id="CCDS8352.1"/>
<dbReference type="RefSeq" id="NP_001532.1">
    <property type="nucleotide sequence ID" value="NM_001541.4"/>
</dbReference>
<dbReference type="PDB" id="6F2R">
    <property type="method" value="X-ray"/>
    <property type="resolution" value="3.90 A"/>
    <property type="chains" value="A/C/D/E/F/G/I/J/K=1-182"/>
</dbReference>
<dbReference type="PDBsum" id="6F2R"/>
<dbReference type="SMR" id="Q16082"/>
<dbReference type="BioGRID" id="109548">
    <property type="interactions" value="136"/>
</dbReference>
<dbReference type="FunCoup" id="Q16082">
    <property type="interactions" value="645"/>
</dbReference>
<dbReference type="IntAct" id="Q16082">
    <property type="interactions" value="192"/>
</dbReference>
<dbReference type="MINT" id="Q16082"/>
<dbReference type="STRING" id="9606.ENSP00000302476"/>
<dbReference type="iPTMnet" id="Q16082"/>
<dbReference type="PhosphoSitePlus" id="Q16082"/>
<dbReference type="BioMuta" id="HSPB2"/>
<dbReference type="MassIVE" id="Q16082"/>
<dbReference type="PaxDb" id="9606-ENSP00000302476"/>
<dbReference type="PeptideAtlas" id="Q16082"/>
<dbReference type="ProteomicsDB" id="60830"/>
<dbReference type="Antibodypedia" id="32089">
    <property type="antibodies" value="519 antibodies from 32 providers"/>
</dbReference>
<dbReference type="DNASU" id="3316"/>
<dbReference type="Ensembl" id="ENST00000304298.4">
    <property type="protein sequence ID" value="ENSP00000302476.3"/>
    <property type="gene ID" value="ENSG00000170276.6"/>
</dbReference>
<dbReference type="GeneID" id="3316"/>
<dbReference type="KEGG" id="hsa:3316"/>
<dbReference type="MANE-Select" id="ENST00000304298.4">
    <property type="protein sequence ID" value="ENSP00000302476.3"/>
    <property type="RefSeq nucleotide sequence ID" value="NM_001541.4"/>
    <property type="RefSeq protein sequence ID" value="NP_001532.1"/>
</dbReference>
<dbReference type="UCSC" id="uc001pmg.3">
    <property type="organism name" value="human"/>
</dbReference>
<dbReference type="AGR" id="HGNC:5247"/>
<dbReference type="CTD" id="3316"/>
<dbReference type="DisGeNET" id="3316"/>
<dbReference type="GeneCards" id="HSPB2"/>
<dbReference type="HGNC" id="HGNC:5247">
    <property type="gene designation" value="HSPB2"/>
</dbReference>
<dbReference type="HPA" id="ENSG00000170276">
    <property type="expression patterns" value="Group enriched (heart muscle, skeletal muscle, tongue)"/>
</dbReference>
<dbReference type="MIM" id="602179">
    <property type="type" value="gene"/>
</dbReference>
<dbReference type="neXtProt" id="NX_Q16082"/>
<dbReference type="OpenTargets" id="ENSG00000170276"/>
<dbReference type="PharmGKB" id="PA29512"/>
<dbReference type="VEuPathDB" id="HostDB:ENSG00000170276"/>
<dbReference type="eggNOG" id="KOG3591">
    <property type="taxonomic scope" value="Eukaryota"/>
</dbReference>
<dbReference type="GeneTree" id="ENSGT00940000161288"/>
<dbReference type="HOGENOM" id="CLU_095001_1_0_1"/>
<dbReference type="InParanoid" id="Q16082"/>
<dbReference type="OMA" id="MSTEYEF"/>
<dbReference type="OrthoDB" id="1431247at2759"/>
<dbReference type="PAN-GO" id="Q16082">
    <property type="GO annotations" value="5 GO annotations based on evolutionary models"/>
</dbReference>
<dbReference type="PhylomeDB" id="Q16082"/>
<dbReference type="PathwayCommons" id="Q16082"/>
<dbReference type="SignaLink" id="Q16082"/>
<dbReference type="BioGRID-ORCS" id="3316">
    <property type="hits" value="9 hits in 1126 CRISPR screens"/>
</dbReference>
<dbReference type="CD-CODE" id="462A97B5">
    <property type="entry name" value="Leucocyte nuclear body"/>
</dbReference>
<dbReference type="CD-CODE" id="9F779CC8">
    <property type="entry name" value="Nuclear body"/>
</dbReference>
<dbReference type="GeneWiki" id="HSPB2"/>
<dbReference type="GenomeRNAi" id="3316"/>
<dbReference type="Pharos" id="Q16082">
    <property type="development level" value="Tbio"/>
</dbReference>
<dbReference type="PRO" id="PR:Q16082"/>
<dbReference type="Proteomes" id="UP000005640">
    <property type="component" value="Chromosome 11"/>
</dbReference>
<dbReference type="RNAct" id="Q16082">
    <property type="molecule type" value="protein"/>
</dbReference>
<dbReference type="Bgee" id="ENSG00000170276">
    <property type="expression patterns" value="Expressed in right atrium auricular region and 94 other cell types or tissues"/>
</dbReference>
<dbReference type="GO" id="GO:0005737">
    <property type="term" value="C:cytoplasm"/>
    <property type="evidence" value="ECO:0000314"/>
    <property type="project" value="UniProtKB"/>
</dbReference>
<dbReference type="GO" id="GO:0005829">
    <property type="term" value="C:cytosol"/>
    <property type="evidence" value="ECO:0000304"/>
    <property type="project" value="ProtInc"/>
</dbReference>
<dbReference type="GO" id="GO:0005634">
    <property type="term" value="C:nucleus"/>
    <property type="evidence" value="ECO:0000314"/>
    <property type="project" value="UniProtKB"/>
</dbReference>
<dbReference type="GO" id="GO:0008047">
    <property type="term" value="F:enzyme activator activity"/>
    <property type="evidence" value="ECO:0000304"/>
    <property type="project" value="ProtInc"/>
</dbReference>
<dbReference type="GO" id="GO:0005212">
    <property type="term" value="F:structural constituent of eye lens"/>
    <property type="evidence" value="ECO:0007669"/>
    <property type="project" value="InterPro"/>
</dbReference>
<dbReference type="GO" id="GO:0051082">
    <property type="term" value="F:unfolded protein binding"/>
    <property type="evidence" value="ECO:0000318"/>
    <property type="project" value="GO_Central"/>
</dbReference>
<dbReference type="GO" id="GO:0043066">
    <property type="term" value="P:negative regulation of apoptotic process"/>
    <property type="evidence" value="ECO:0000318"/>
    <property type="project" value="GO_Central"/>
</dbReference>
<dbReference type="GO" id="GO:0042026">
    <property type="term" value="P:protein refolding"/>
    <property type="evidence" value="ECO:0000318"/>
    <property type="project" value="GO_Central"/>
</dbReference>
<dbReference type="GO" id="GO:0009408">
    <property type="term" value="P:response to heat"/>
    <property type="evidence" value="ECO:0000318"/>
    <property type="project" value="GO_Central"/>
</dbReference>
<dbReference type="GO" id="GO:0006986">
    <property type="term" value="P:response to unfolded protein"/>
    <property type="evidence" value="ECO:0000303"/>
    <property type="project" value="ProtInc"/>
</dbReference>
<dbReference type="GO" id="GO:0007525">
    <property type="term" value="P:somatic muscle development"/>
    <property type="evidence" value="ECO:0007669"/>
    <property type="project" value="Ensembl"/>
</dbReference>
<dbReference type="FunFam" id="2.60.40.790:FF:000025">
    <property type="entry name" value="heat shock protein beta-2"/>
    <property type="match status" value="1"/>
</dbReference>
<dbReference type="Gene3D" id="2.60.40.790">
    <property type="match status" value="1"/>
</dbReference>
<dbReference type="InterPro" id="IPR002068">
    <property type="entry name" value="A-crystallin/Hsp20_dom"/>
</dbReference>
<dbReference type="InterPro" id="IPR001436">
    <property type="entry name" value="Alpha-crystallin/sHSP_animal"/>
</dbReference>
<dbReference type="InterPro" id="IPR003090">
    <property type="entry name" value="Alpha-crystallin_N"/>
</dbReference>
<dbReference type="InterPro" id="IPR008978">
    <property type="entry name" value="HSP20-like_chaperone"/>
</dbReference>
<dbReference type="PANTHER" id="PTHR45640:SF27">
    <property type="entry name" value="HEAT SHOCK PROTEIN BETA-2"/>
    <property type="match status" value="1"/>
</dbReference>
<dbReference type="PANTHER" id="PTHR45640">
    <property type="entry name" value="HEAT SHOCK PROTEIN HSP-12.2-RELATED"/>
    <property type="match status" value="1"/>
</dbReference>
<dbReference type="Pfam" id="PF00525">
    <property type="entry name" value="Crystallin"/>
    <property type="match status" value="1"/>
</dbReference>
<dbReference type="Pfam" id="PF00011">
    <property type="entry name" value="HSP20"/>
    <property type="match status" value="1"/>
</dbReference>
<dbReference type="PRINTS" id="PR00299">
    <property type="entry name" value="ACRYSTALLIN"/>
</dbReference>
<dbReference type="SUPFAM" id="SSF49764">
    <property type="entry name" value="HSP20-like chaperones"/>
    <property type="match status" value="1"/>
</dbReference>
<dbReference type="PROSITE" id="PS01031">
    <property type="entry name" value="SHSP"/>
    <property type="match status" value="1"/>
</dbReference>
<proteinExistence type="evidence at protein level"/>
<comment type="function">
    <text evidence="3">May regulate the kinase DMPK.</text>
</comment>
<comment type="subunit">
    <text evidence="3">Interacts with DMPK; may enhance its kinase activity.</text>
</comment>
<comment type="interaction">
    <interactant intactId="EBI-739395">
        <id>Q16082</id>
    </interactant>
    <interactant intactId="EBI-2809489">
        <id>Q9NQ94</id>
        <label>A1CF</label>
    </interactant>
    <organismsDiffer>false</organismsDiffer>
    <experiments>3</experiments>
</comment>
<comment type="interaction">
    <interactant intactId="EBI-739395">
        <id>Q16082</id>
    </interactant>
    <interactant intactId="EBI-77613">
        <id>P05067</id>
        <label>APP</label>
    </interactant>
    <organismsDiffer>false</organismsDiffer>
    <experiments>3</experiments>
</comment>
<comment type="interaction">
    <interactant intactId="EBI-739395">
        <id>Q16082</id>
    </interactant>
    <interactant intactId="EBI-747185">
        <id>O95817</id>
        <label>BAG3</label>
    </interactant>
    <organismsDiffer>false</organismsDiffer>
    <experiments>5</experiments>
</comment>
<comment type="interaction">
    <interactant intactId="EBI-739395">
        <id>Q16082</id>
    </interactant>
    <interactant intactId="EBI-745073">
        <id>Q9BXY8</id>
        <label>BEX2</label>
    </interactant>
    <organismsDiffer>false</organismsDiffer>
    <experiments>3</experiments>
</comment>
<comment type="interaction">
    <interactant intactId="EBI-739395">
        <id>Q16082</id>
    </interactant>
    <interactant intactId="EBI-1012434">
        <id>Q6AI39</id>
        <label>BICRAL</label>
    </interactant>
    <organismsDiffer>false</organismsDiffer>
    <experiments>3</experiments>
</comment>
<comment type="interaction">
    <interactant intactId="EBI-739395">
        <id>Q16082</id>
    </interactant>
    <interactant intactId="EBI-741885">
        <id>Q96LK0</id>
        <label>CEP19</label>
    </interactant>
    <organismsDiffer>false</organismsDiffer>
    <experiments>6</experiments>
</comment>
<comment type="interaction">
    <interactant intactId="EBI-739395">
        <id>Q16082</id>
    </interactant>
    <interactant intactId="EBI-739060">
        <id>P02511</id>
        <label>CRYAB</label>
    </interactant>
    <organismsDiffer>false</organismsDiffer>
    <experiments>3</experiments>
</comment>
<comment type="interaction">
    <interactant intactId="EBI-739395">
        <id>Q16082</id>
    </interactant>
    <interactant intactId="EBI-744099">
        <id>Q9H0I2</id>
        <label>ENKD1</label>
    </interactant>
    <organismsDiffer>false</organismsDiffer>
    <experiments>3</experiments>
</comment>
<comment type="interaction">
    <interactant intactId="EBI-739395">
        <id>Q16082</id>
    </interactant>
    <interactant intactId="EBI-745290">
        <id>P17482</id>
        <label>HOXB9</label>
    </interactant>
    <organismsDiffer>false</organismsDiffer>
    <experiments>3</experiments>
</comment>
<comment type="interaction">
    <interactant intactId="EBI-739395">
        <id>Q16082</id>
    </interactant>
    <interactant intactId="EBI-739074">
        <id>Q9UJY1</id>
        <label>HSPB8</label>
    </interactant>
    <organismsDiffer>false</organismsDiffer>
    <experiments>3</experiments>
</comment>
<comment type="interaction">
    <interactant intactId="EBI-739395">
        <id>Q16082</id>
    </interactant>
    <interactant intactId="EBI-2556193">
        <id>Q63ZY3</id>
        <label>KANK2</label>
    </interactant>
    <organismsDiffer>false</organismsDiffer>
    <experiments>3</experiments>
</comment>
<comment type="interaction">
    <interactant intactId="EBI-739395">
        <id>Q16082</id>
    </interactant>
    <interactant intactId="EBI-8639312">
        <id>P25800</id>
        <label>LMO1</label>
    </interactant>
    <organismsDiffer>false</organismsDiffer>
    <experiments>3</experiments>
</comment>
<comment type="interaction">
    <interactant intactId="EBI-739395">
        <id>Q16082</id>
    </interactant>
    <interactant intactId="EBI-11742507">
        <id>Q8TAP4-4</id>
        <label>LMO3</label>
    </interactant>
    <organismsDiffer>false</organismsDiffer>
    <experiments>3</experiments>
</comment>
<comment type="interaction">
    <interactant intactId="EBI-739395">
        <id>Q16082</id>
    </interactant>
    <interactant intactId="EBI-2555085">
        <id>Q8IVT2</id>
        <label>MISP</label>
    </interactant>
    <organismsDiffer>false</organismsDiffer>
    <experiments>3</experiments>
</comment>
<comment type="interaction">
    <interactant intactId="EBI-739395">
        <id>Q16082</id>
    </interactant>
    <interactant intactId="EBI-11022007">
        <id>Q9HBE1-4</id>
        <label>PATZ1</label>
    </interactant>
    <organismsDiffer>false</organismsDiffer>
    <experiments>3</experiments>
</comment>
<comment type="interaction">
    <interactant intactId="EBI-739395">
        <id>Q16082</id>
    </interactant>
    <interactant intactId="EBI-1389308">
        <id>Q7Z3K3</id>
        <label>POGZ</label>
    </interactant>
    <organismsDiffer>false</organismsDiffer>
    <experiments>3</experiments>
</comment>
<comment type="interaction">
    <interactant intactId="EBI-739395">
        <id>Q16082</id>
    </interactant>
    <interactant intactId="EBI-11986293">
        <id>P0CG20</id>
        <label>PRR35</label>
    </interactant>
    <organismsDiffer>false</organismsDiffer>
    <experiments>3</experiments>
</comment>
<comment type="interaction">
    <interactant intactId="EBI-739395">
        <id>Q16082</id>
    </interactant>
    <interactant intactId="EBI-10188956">
        <id>O75679</id>
        <label>RFPL3</label>
    </interactant>
    <organismsDiffer>false</organismsDiffer>
    <experiments>4</experiments>
</comment>
<comment type="interaction">
    <interactant intactId="EBI-739395">
        <id>Q16082</id>
    </interactant>
    <interactant intactId="EBI-298169">
        <id>Q96RF0</id>
        <label>SNX18</label>
    </interactant>
    <organismsDiffer>false</organismsDiffer>
    <experiments>3</experiments>
</comment>
<comment type="interaction">
    <interactant intactId="EBI-739395">
        <id>Q16082</id>
    </interactant>
    <interactant intactId="EBI-3939165">
        <id>O43711</id>
        <label>TLX3</label>
    </interactant>
    <organismsDiffer>false</organismsDiffer>
    <experiments>3</experiments>
</comment>
<comment type="interaction">
    <interactant intactId="EBI-739395">
        <id>Q16082</id>
    </interactant>
    <interactant intactId="EBI-11980193">
        <id>Q14119</id>
        <label>VEZF1</label>
    </interactant>
    <organismsDiffer>false</organismsDiffer>
    <experiments>3</experiments>
</comment>
<comment type="interaction">
    <interactant intactId="EBI-739395">
        <id>Q16082</id>
    </interactant>
    <interactant intactId="EBI-12040603">
        <id>Q9NZC7-5</id>
        <label>WWOX</label>
    </interactant>
    <organismsDiffer>false</organismsDiffer>
    <experiments>3</experiments>
</comment>
<comment type="subcellular location">
    <subcellularLocation>
        <location evidence="2">Cytoplasm</location>
    </subcellularLocation>
    <subcellularLocation>
        <location evidence="2">Nucleus</location>
    </subcellularLocation>
    <text>Localizes to nuclear foci.</text>
</comment>
<comment type="tissue specificity">
    <text>Expressed preferentially in skeletal muscle and heart but not in the lens.</text>
</comment>
<comment type="similarity">
    <text evidence="1">Belongs to the small heat shock protein (HSP20) family.</text>
</comment>
<reference key="1">
    <citation type="journal article" date="1997" name="Genomics">
        <title>Identification and characterization of the gene encoding a new member of the alpha-crystallin/small hsp family, closely linked to the alphaB-crystallin gene in a head-to-head manner.</title>
        <authorList>
            <person name="Iwaki A."/>
            <person name="Nagano T."/>
            <person name="Nakagawa M."/>
            <person name="Iwaki T."/>
            <person name="Fukumaki Y."/>
        </authorList>
    </citation>
    <scope>NUCLEOTIDE SEQUENCE [GENOMIC DNA]</scope>
</reference>
<reference key="2">
    <citation type="journal article" date="1998" name="J. Cell Biol.">
        <title>MKBP, a novel member of the small heat shock protein family, binds and activates the myotonic dystrophy protein kinase.</title>
        <authorList>
            <person name="Suzuki A."/>
            <person name="Sugiyama Y."/>
            <person name="Hayashi Y."/>
            <person name="Nyu-i N."/>
            <person name="Yoshida M."/>
            <person name="Nonaka I."/>
            <person name="Ishiura S."/>
            <person name="Arahata K."/>
            <person name="Ohno S."/>
        </authorList>
    </citation>
    <scope>NUCLEOTIDE SEQUENCE [MRNA]</scope>
    <scope>FUNCTION</scope>
    <scope>INTERACTION WITH DMPK</scope>
    <source>
        <tissue>Muscle</tissue>
    </source>
</reference>
<reference key="3">
    <citation type="submission" date="2004-06" db="EMBL/GenBank/DDBJ databases">
        <title>Cloning of human full open reading frames in Gateway(TM) system entry vector (pDONR201).</title>
        <authorList>
            <person name="Ebert L."/>
            <person name="Schick M."/>
            <person name="Neubert P."/>
            <person name="Schatten R."/>
            <person name="Henze S."/>
            <person name="Korn B."/>
        </authorList>
    </citation>
    <scope>NUCLEOTIDE SEQUENCE [LARGE SCALE MRNA]</scope>
</reference>
<reference key="4">
    <citation type="submission" date="2002-12" db="EMBL/GenBank/DDBJ databases">
        <authorList>
            <consortium name="NIEHS SNPs program"/>
        </authorList>
    </citation>
    <scope>NUCLEOTIDE SEQUENCE [GENOMIC DNA]</scope>
    <scope>VARIANT SER-111</scope>
</reference>
<reference key="5">
    <citation type="journal article" date="2004" name="Genome Res.">
        <title>The status, quality, and expansion of the NIH full-length cDNA project: the Mammalian Gene Collection (MGC).</title>
        <authorList>
            <consortium name="The MGC Project Team"/>
        </authorList>
    </citation>
    <scope>NUCLEOTIDE SEQUENCE [LARGE SCALE MRNA]</scope>
</reference>
<reference key="6">
    <citation type="journal article" date="1993" name="J. Endocrinol. Invest.">
        <title>Muscle autoantigens in thyroid associated ophthalmopathy: the limits of molecular genetics.</title>
        <authorList>
            <person name="Elisei R."/>
            <person name="Weightman D."/>
            <person name="Kendall-Taylor P."/>
            <person name="Vassart G."/>
            <person name="Ludgate M."/>
        </authorList>
    </citation>
    <scope>NUCLEOTIDE SEQUENCE [MRNA] OF 88-182</scope>
</reference>
<reference key="7">
    <citation type="journal article" date="2009" name="Biochim. Biophys. Acta">
        <title>HSPB7 is a SC35 speckle resident small heat shock protein.</title>
        <authorList>
            <person name="Vos M.J."/>
            <person name="Kanon B."/>
            <person name="Kampinga H.H."/>
        </authorList>
    </citation>
    <scope>SUBCELLULAR LOCATION</scope>
</reference>
<gene>
    <name type="primary">HSPB2</name>
</gene>
<sequence>MSGRSVPHAHPATAEYEFANPSRLGEQRFGEGLLPEEILTPTLYHGYYVRPRAAPAGEGSRAGASELRLSEGKFQAFLDVSHFTPDEVTVRTVDNLLEVSARHPQRLDRHGFVSREFCRTYVLPADVDPWRVRAALSHDGILNLEAPRGGRHLDTEVNEVYISLLPAPPDPEEEEEAAIVEP</sequence>